<keyword id="KW-0067">ATP-binding</keyword>
<keyword id="KW-0963">Cytoplasm</keyword>
<keyword id="KW-0227">DNA damage</keyword>
<keyword id="KW-0234">DNA repair</keyword>
<keyword id="KW-0235">DNA replication</keyword>
<keyword id="KW-0238">DNA-binding</keyword>
<keyword id="KW-0547">Nucleotide-binding</keyword>
<keyword id="KW-0742">SOS response</keyword>
<comment type="function">
    <text evidence="1">The RecF protein is involved in DNA metabolism; it is required for DNA replication and normal SOS inducibility. RecF binds preferentially to single-stranded, linear DNA. It also seems to bind ATP.</text>
</comment>
<comment type="subcellular location">
    <subcellularLocation>
        <location evidence="1">Cytoplasm</location>
    </subcellularLocation>
</comment>
<comment type="similarity">
    <text evidence="1">Belongs to the RecF family.</text>
</comment>
<reference key="1">
    <citation type="journal article" date="2008" name="J. Bacteriol.">
        <title>The complete genome sequence of Escherichia coli DH10B: insights into the biology of a laboratory workhorse.</title>
        <authorList>
            <person name="Durfee T."/>
            <person name="Nelson R."/>
            <person name="Baldwin S."/>
            <person name="Plunkett G. III"/>
            <person name="Burland V."/>
            <person name="Mau B."/>
            <person name="Petrosino J.F."/>
            <person name="Qin X."/>
            <person name="Muzny D.M."/>
            <person name="Ayele M."/>
            <person name="Gibbs R.A."/>
            <person name="Csorgo B."/>
            <person name="Posfai G."/>
            <person name="Weinstock G.M."/>
            <person name="Blattner F.R."/>
        </authorList>
    </citation>
    <scope>NUCLEOTIDE SEQUENCE [LARGE SCALE GENOMIC DNA]</scope>
    <source>
        <strain>K12 / DH10B</strain>
    </source>
</reference>
<organism>
    <name type="scientific">Escherichia coli (strain K12 / DH10B)</name>
    <dbReference type="NCBI Taxonomy" id="316385"/>
    <lineage>
        <taxon>Bacteria</taxon>
        <taxon>Pseudomonadati</taxon>
        <taxon>Pseudomonadota</taxon>
        <taxon>Gammaproteobacteria</taxon>
        <taxon>Enterobacterales</taxon>
        <taxon>Enterobacteriaceae</taxon>
        <taxon>Escherichia</taxon>
    </lineage>
</organism>
<protein>
    <recommendedName>
        <fullName evidence="1">DNA replication and repair protein RecF</fullName>
    </recommendedName>
</protein>
<sequence length="357" mass="40514">MSLTRLLIRDFRNIETADLALSPGFNFLVGANGSGKTSVLEAIYTLGHGRAFRSLQIGRVIRHEQEAFVLHGRLQGEERETAIGLTKDKQGDSKVRIDGTDGHKVAELAHLMPMQLITPEGFTLLNGGPKYRRAFLDWGCFHNEPGFFTAWSNLKRLLKQRNAALRQVTRYEQLRPWDKELIPLAEQISTWRAEYSAGIAADMADTCKQFLPEFSLTFSFQRGWEKETEYAEVLERNFERDRQLTYTAHGPHKADLRIRADGAPVEDTLSRGQLKLLMCALRLAQGEFLTRESGRRCLYLIDDFASELDDERRGLLASRLKATQSQVFVSAISAEHVIDMSDENSKMFTVEKGKITD</sequence>
<accession>B1X9S9</accession>
<evidence type="ECO:0000255" key="1">
    <source>
        <dbReference type="HAMAP-Rule" id="MF_00365"/>
    </source>
</evidence>
<dbReference type="EMBL" id="CP000948">
    <property type="protein sequence ID" value="ACB04744.1"/>
    <property type="molecule type" value="Genomic_DNA"/>
</dbReference>
<dbReference type="RefSeq" id="WP_000060112.1">
    <property type="nucleotide sequence ID" value="NC_010473.1"/>
</dbReference>
<dbReference type="SMR" id="B1X9S9"/>
<dbReference type="GeneID" id="93778441"/>
<dbReference type="KEGG" id="ecd:ECDH10B_3886"/>
<dbReference type="HOGENOM" id="CLU_040267_0_0_6"/>
<dbReference type="GO" id="GO:0005737">
    <property type="term" value="C:cytoplasm"/>
    <property type="evidence" value="ECO:0007669"/>
    <property type="project" value="UniProtKB-SubCell"/>
</dbReference>
<dbReference type="GO" id="GO:0005524">
    <property type="term" value="F:ATP binding"/>
    <property type="evidence" value="ECO:0007669"/>
    <property type="project" value="UniProtKB-UniRule"/>
</dbReference>
<dbReference type="GO" id="GO:0003697">
    <property type="term" value="F:single-stranded DNA binding"/>
    <property type="evidence" value="ECO:0007669"/>
    <property type="project" value="UniProtKB-UniRule"/>
</dbReference>
<dbReference type="GO" id="GO:0006260">
    <property type="term" value="P:DNA replication"/>
    <property type="evidence" value="ECO:0007669"/>
    <property type="project" value="UniProtKB-UniRule"/>
</dbReference>
<dbReference type="GO" id="GO:0000731">
    <property type="term" value="P:DNA synthesis involved in DNA repair"/>
    <property type="evidence" value="ECO:0007669"/>
    <property type="project" value="TreeGrafter"/>
</dbReference>
<dbReference type="GO" id="GO:0006302">
    <property type="term" value="P:double-strand break repair"/>
    <property type="evidence" value="ECO:0007669"/>
    <property type="project" value="TreeGrafter"/>
</dbReference>
<dbReference type="GO" id="GO:0009432">
    <property type="term" value="P:SOS response"/>
    <property type="evidence" value="ECO:0007669"/>
    <property type="project" value="UniProtKB-UniRule"/>
</dbReference>
<dbReference type="FunFam" id="1.20.1050.90:FF:000001">
    <property type="entry name" value="DNA replication and repair protein RecF"/>
    <property type="match status" value="1"/>
</dbReference>
<dbReference type="Gene3D" id="3.40.50.300">
    <property type="entry name" value="P-loop containing nucleotide triphosphate hydrolases"/>
    <property type="match status" value="1"/>
</dbReference>
<dbReference type="Gene3D" id="1.20.1050.90">
    <property type="entry name" value="RecF/RecN/SMC, N-terminal domain"/>
    <property type="match status" value="1"/>
</dbReference>
<dbReference type="HAMAP" id="MF_00365">
    <property type="entry name" value="RecF"/>
    <property type="match status" value="1"/>
</dbReference>
<dbReference type="InterPro" id="IPR001238">
    <property type="entry name" value="DNA-binding_RecF"/>
</dbReference>
<dbReference type="InterPro" id="IPR018078">
    <property type="entry name" value="DNA-binding_RecF_CS"/>
</dbReference>
<dbReference type="InterPro" id="IPR027417">
    <property type="entry name" value="P-loop_NTPase"/>
</dbReference>
<dbReference type="InterPro" id="IPR003395">
    <property type="entry name" value="RecF/RecN/SMC_N"/>
</dbReference>
<dbReference type="InterPro" id="IPR042174">
    <property type="entry name" value="RecF_2"/>
</dbReference>
<dbReference type="NCBIfam" id="TIGR00611">
    <property type="entry name" value="recf"/>
    <property type="match status" value="1"/>
</dbReference>
<dbReference type="PANTHER" id="PTHR32182">
    <property type="entry name" value="DNA REPLICATION AND REPAIR PROTEIN RECF"/>
    <property type="match status" value="1"/>
</dbReference>
<dbReference type="PANTHER" id="PTHR32182:SF0">
    <property type="entry name" value="DNA REPLICATION AND REPAIR PROTEIN RECF"/>
    <property type="match status" value="1"/>
</dbReference>
<dbReference type="Pfam" id="PF02463">
    <property type="entry name" value="SMC_N"/>
    <property type="match status" value="1"/>
</dbReference>
<dbReference type="SUPFAM" id="SSF52540">
    <property type="entry name" value="P-loop containing nucleoside triphosphate hydrolases"/>
    <property type="match status" value="1"/>
</dbReference>
<dbReference type="PROSITE" id="PS00617">
    <property type="entry name" value="RECF_1"/>
    <property type="match status" value="1"/>
</dbReference>
<dbReference type="PROSITE" id="PS00618">
    <property type="entry name" value="RECF_2"/>
    <property type="match status" value="1"/>
</dbReference>
<gene>
    <name evidence="1" type="primary">recF</name>
    <name type="ordered locus">ECDH10B_3886</name>
</gene>
<feature type="chain" id="PRO_1000121112" description="DNA replication and repair protein RecF">
    <location>
        <begin position="1"/>
        <end position="357"/>
    </location>
</feature>
<feature type="binding site" evidence="1">
    <location>
        <begin position="30"/>
        <end position="37"/>
    </location>
    <ligand>
        <name>ATP</name>
        <dbReference type="ChEBI" id="CHEBI:30616"/>
    </ligand>
</feature>
<proteinExistence type="inferred from homology"/>
<name>RECF_ECODH</name>